<protein>
    <recommendedName>
        <fullName evidence="1">ATP synthase subunit a</fullName>
    </recommendedName>
    <alternativeName>
        <fullName evidence="1">ATP synthase F0 sector subunit a</fullName>
    </alternativeName>
    <alternativeName>
        <fullName evidence="1">F-ATPase subunit 6</fullName>
    </alternativeName>
</protein>
<sequence length="264" mass="29391">MAATGDALTPQGYIQHHLTNLSVGEGFWTWHIDSLLFSVGLGVLFLWIFRSVGKKATTGVPGKLQCLIEMIVEFVDASVKETFHGRNPVIAPLALTIFVWVFMMNFMDMIPVDWLPSLALLAGVEYLKVVPTTDVNITFSLAIGVFVLIIYYSIKVKGVSGFVKELTLQPFNHWAMIPVNLLLESVTLIAKPISLALRLFGNLYAGELIFILIALMYSANWAMATLGVGLQLGWLIFHILVITLQAFIFMMLTIVYLSMAHEDH</sequence>
<name>ATP6_SHEDO</name>
<organism>
    <name type="scientific">Shewanella denitrificans (strain OS217 / ATCC BAA-1090 / DSM 15013)</name>
    <dbReference type="NCBI Taxonomy" id="318161"/>
    <lineage>
        <taxon>Bacteria</taxon>
        <taxon>Pseudomonadati</taxon>
        <taxon>Pseudomonadota</taxon>
        <taxon>Gammaproteobacteria</taxon>
        <taxon>Alteromonadales</taxon>
        <taxon>Shewanellaceae</taxon>
        <taxon>Shewanella</taxon>
    </lineage>
</organism>
<proteinExistence type="inferred from homology"/>
<gene>
    <name evidence="1" type="primary">atpB</name>
    <name type="ordered locus">Sden_3758</name>
</gene>
<feature type="chain" id="PRO_0000362451" description="ATP synthase subunit a">
    <location>
        <begin position="1"/>
        <end position="264"/>
    </location>
</feature>
<feature type="transmembrane region" description="Helical" evidence="1">
    <location>
        <begin position="29"/>
        <end position="49"/>
    </location>
</feature>
<feature type="transmembrane region" description="Helical" evidence="1">
    <location>
        <begin position="90"/>
        <end position="110"/>
    </location>
</feature>
<feature type="transmembrane region" description="Helical" evidence="1">
    <location>
        <begin position="111"/>
        <end position="131"/>
    </location>
</feature>
<feature type="transmembrane region" description="Helical" evidence="1">
    <location>
        <begin position="134"/>
        <end position="154"/>
    </location>
</feature>
<feature type="transmembrane region" description="Helical" evidence="1">
    <location>
        <begin position="177"/>
        <end position="197"/>
    </location>
</feature>
<feature type="transmembrane region" description="Helical" evidence="1">
    <location>
        <begin position="208"/>
        <end position="228"/>
    </location>
</feature>
<feature type="transmembrane region" description="Helical" evidence="1">
    <location>
        <begin position="235"/>
        <end position="255"/>
    </location>
</feature>
<keyword id="KW-0066">ATP synthesis</keyword>
<keyword id="KW-0997">Cell inner membrane</keyword>
<keyword id="KW-1003">Cell membrane</keyword>
<keyword id="KW-0138">CF(0)</keyword>
<keyword id="KW-0375">Hydrogen ion transport</keyword>
<keyword id="KW-0406">Ion transport</keyword>
<keyword id="KW-0472">Membrane</keyword>
<keyword id="KW-1185">Reference proteome</keyword>
<keyword id="KW-0812">Transmembrane</keyword>
<keyword id="KW-1133">Transmembrane helix</keyword>
<keyword id="KW-0813">Transport</keyword>
<dbReference type="EMBL" id="CP000302">
    <property type="protein sequence ID" value="ABE57031.1"/>
    <property type="molecule type" value="Genomic_DNA"/>
</dbReference>
<dbReference type="RefSeq" id="WP_011498169.1">
    <property type="nucleotide sequence ID" value="NC_007954.1"/>
</dbReference>
<dbReference type="SMR" id="Q12HP5"/>
<dbReference type="STRING" id="318161.Sden_3758"/>
<dbReference type="KEGG" id="sdn:Sden_3758"/>
<dbReference type="eggNOG" id="COG0356">
    <property type="taxonomic scope" value="Bacteria"/>
</dbReference>
<dbReference type="HOGENOM" id="CLU_041018_1_0_6"/>
<dbReference type="OrthoDB" id="9789241at2"/>
<dbReference type="Proteomes" id="UP000001982">
    <property type="component" value="Chromosome"/>
</dbReference>
<dbReference type="GO" id="GO:0005886">
    <property type="term" value="C:plasma membrane"/>
    <property type="evidence" value="ECO:0007669"/>
    <property type="project" value="UniProtKB-SubCell"/>
</dbReference>
<dbReference type="GO" id="GO:0045259">
    <property type="term" value="C:proton-transporting ATP synthase complex"/>
    <property type="evidence" value="ECO:0007669"/>
    <property type="project" value="UniProtKB-KW"/>
</dbReference>
<dbReference type="GO" id="GO:0046933">
    <property type="term" value="F:proton-transporting ATP synthase activity, rotational mechanism"/>
    <property type="evidence" value="ECO:0007669"/>
    <property type="project" value="UniProtKB-UniRule"/>
</dbReference>
<dbReference type="GO" id="GO:0042777">
    <property type="term" value="P:proton motive force-driven plasma membrane ATP synthesis"/>
    <property type="evidence" value="ECO:0007669"/>
    <property type="project" value="TreeGrafter"/>
</dbReference>
<dbReference type="CDD" id="cd00310">
    <property type="entry name" value="ATP-synt_Fo_a_6"/>
    <property type="match status" value="1"/>
</dbReference>
<dbReference type="FunFam" id="1.20.120.220:FF:000002">
    <property type="entry name" value="ATP synthase subunit a"/>
    <property type="match status" value="1"/>
</dbReference>
<dbReference type="Gene3D" id="1.20.120.220">
    <property type="entry name" value="ATP synthase, F0 complex, subunit A"/>
    <property type="match status" value="1"/>
</dbReference>
<dbReference type="HAMAP" id="MF_01393">
    <property type="entry name" value="ATP_synth_a_bact"/>
    <property type="match status" value="1"/>
</dbReference>
<dbReference type="InterPro" id="IPR045082">
    <property type="entry name" value="ATP_syn_F0_a_bact/chloroplast"/>
</dbReference>
<dbReference type="InterPro" id="IPR000568">
    <property type="entry name" value="ATP_synth_F0_asu"/>
</dbReference>
<dbReference type="InterPro" id="IPR023011">
    <property type="entry name" value="ATP_synth_F0_asu_AS"/>
</dbReference>
<dbReference type="InterPro" id="IPR035908">
    <property type="entry name" value="F0_ATP_A_sf"/>
</dbReference>
<dbReference type="NCBIfam" id="TIGR01131">
    <property type="entry name" value="ATP_synt_6_or_A"/>
    <property type="match status" value="1"/>
</dbReference>
<dbReference type="NCBIfam" id="NF004477">
    <property type="entry name" value="PRK05815.1-1"/>
    <property type="match status" value="1"/>
</dbReference>
<dbReference type="PANTHER" id="PTHR42823">
    <property type="entry name" value="ATP SYNTHASE SUBUNIT A, CHLOROPLASTIC"/>
    <property type="match status" value="1"/>
</dbReference>
<dbReference type="PANTHER" id="PTHR42823:SF3">
    <property type="entry name" value="ATP SYNTHASE SUBUNIT A, CHLOROPLASTIC"/>
    <property type="match status" value="1"/>
</dbReference>
<dbReference type="Pfam" id="PF00119">
    <property type="entry name" value="ATP-synt_A"/>
    <property type="match status" value="1"/>
</dbReference>
<dbReference type="PRINTS" id="PR00123">
    <property type="entry name" value="ATPASEA"/>
</dbReference>
<dbReference type="SUPFAM" id="SSF81336">
    <property type="entry name" value="F1F0 ATP synthase subunit A"/>
    <property type="match status" value="1"/>
</dbReference>
<dbReference type="PROSITE" id="PS00449">
    <property type="entry name" value="ATPASE_A"/>
    <property type="match status" value="1"/>
</dbReference>
<comment type="function">
    <text evidence="1">Key component of the proton channel; it plays a direct role in the translocation of protons across the membrane.</text>
</comment>
<comment type="subunit">
    <text evidence="1">F-type ATPases have 2 components, CF(1) - the catalytic core - and CF(0) - the membrane proton channel. CF(1) has five subunits: alpha(3), beta(3), gamma(1), delta(1), epsilon(1). CF(0) has three main subunits: a(1), b(2) and c(9-12). The alpha and beta chains form an alternating ring which encloses part of the gamma chain. CF(1) is attached to CF(0) by a central stalk formed by the gamma and epsilon chains, while a peripheral stalk is formed by the delta and b chains.</text>
</comment>
<comment type="subcellular location">
    <subcellularLocation>
        <location evidence="1">Cell inner membrane</location>
        <topology evidence="1">Multi-pass membrane protein</topology>
    </subcellularLocation>
</comment>
<comment type="similarity">
    <text evidence="1">Belongs to the ATPase A chain family.</text>
</comment>
<accession>Q12HP5</accession>
<reference key="1">
    <citation type="submission" date="2006-03" db="EMBL/GenBank/DDBJ databases">
        <title>Complete sequence of Shewanella denitrificans OS217.</title>
        <authorList>
            <consortium name="US DOE Joint Genome Institute"/>
            <person name="Copeland A."/>
            <person name="Lucas S."/>
            <person name="Lapidus A."/>
            <person name="Barry K."/>
            <person name="Detter J.C."/>
            <person name="Glavina del Rio T."/>
            <person name="Hammon N."/>
            <person name="Israni S."/>
            <person name="Dalin E."/>
            <person name="Tice H."/>
            <person name="Pitluck S."/>
            <person name="Brettin T."/>
            <person name="Bruce D."/>
            <person name="Han C."/>
            <person name="Tapia R."/>
            <person name="Gilna P."/>
            <person name="Kiss H."/>
            <person name="Schmutz J."/>
            <person name="Larimer F."/>
            <person name="Land M."/>
            <person name="Hauser L."/>
            <person name="Kyrpides N."/>
            <person name="Lykidis A."/>
            <person name="Richardson P."/>
        </authorList>
    </citation>
    <scope>NUCLEOTIDE SEQUENCE [LARGE SCALE GENOMIC DNA]</scope>
    <source>
        <strain>OS217 / ATCC BAA-1090 / DSM 15013</strain>
    </source>
</reference>
<evidence type="ECO:0000255" key="1">
    <source>
        <dbReference type="HAMAP-Rule" id="MF_01393"/>
    </source>
</evidence>